<name>LSM7_YEAST</name>
<reference key="1">
    <citation type="journal article" date="1995" name="Yeast">
        <title>A 43.5 kb segment of yeast chromosome XIV, which contains MFA2, MEP2, CAP/SRV2, NAM9, FKB1/FPR1/RBP1, MOM22 and CPT1, predicts an adenosine deaminase gene and 14 new open reading frames.</title>
        <authorList>
            <person name="Mallet L."/>
            <person name="Bussereau F."/>
            <person name="Jacquet M."/>
        </authorList>
    </citation>
    <scope>NUCLEOTIDE SEQUENCE [GENOMIC DNA]</scope>
    <source>
        <strain>ATCC 204508 / S288c</strain>
    </source>
</reference>
<reference key="2">
    <citation type="journal article" date="1996" name="Yeast">
        <title>The sequence of 36.8 kb from the left arm of chromosome XIV reveals 24 complete open reading frames: 18 correspond to new genes, one of which encodes a protein similar to the human myotonic dystrophy kinase.</title>
        <authorList>
            <person name="Nasr F."/>
            <person name="Becam A.-M."/>
            <person name="Herbert C.J."/>
        </authorList>
    </citation>
    <scope>NUCLEOTIDE SEQUENCE [GENOMIC DNA]</scope>
    <source>
        <strain>ATCC 96604 / S288c / FY1679</strain>
    </source>
</reference>
<reference key="3">
    <citation type="journal article" date="1997" name="Nature">
        <title>The nucleotide sequence of Saccharomyces cerevisiae chromosome XIV and its evolutionary implications.</title>
        <authorList>
            <person name="Philippsen P."/>
            <person name="Kleine K."/>
            <person name="Poehlmann R."/>
            <person name="Duesterhoeft A."/>
            <person name="Hamberg K."/>
            <person name="Hegemann J.H."/>
            <person name="Obermaier B."/>
            <person name="Urrestarazu L.A."/>
            <person name="Aert R."/>
            <person name="Albermann K."/>
            <person name="Altmann R."/>
            <person name="Andre B."/>
            <person name="Baladron V."/>
            <person name="Ballesta J.P.G."/>
            <person name="Becam A.-M."/>
            <person name="Beinhauer J.D."/>
            <person name="Boskovic J."/>
            <person name="Buitrago M.J."/>
            <person name="Bussereau F."/>
            <person name="Coster F."/>
            <person name="Crouzet M."/>
            <person name="D'Angelo M."/>
            <person name="Dal Pero F."/>
            <person name="De Antoni A."/>
            <person name="del Rey F."/>
            <person name="Doignon F."/>
            <person name="Domdey H."/>
            <person name="Dubois E."/>
            <person name="Fiedler T.A."/>
            <person name="Fleig U."/>
            <person name="Floeth M."/>
            <person name="Fritz C."/>
            <person name="Gaillardin C."/>
            <person name="Garcia-Cantalejo J.M."/>
            <person name="Glansdorff N."/>
            <person name="Goffeau A."/>
            <person name="Gueldener U."/>
            <person name="Herbert C.J."/>
            <person name="Heumann K."/>
            <person name="Heuss-Neitzel D."/>
            <person name="Hilbert H."/>
            <person name="Hinni K."/>
            <person name="Iraqui Houssaini I."/>
            <person name="Jacquet M."/>
            <person name="Jimenez A."/>
            <person name="Jonniaux J.-L."/>
            <person name="Karpfinger-Hartl L."/>
            <person name="Lanfranchi G."/>
            <person name="Lepingle A."/>
            <person name="Levesque H."/>
            <person name="Lyck R."/>
            <person name="Maftahi M."/>
            <person name="Mallet L."/>
            <person name="Maurer C.T.C."/>
            <person name="Messenguy F."/>
            <person name="Mewes H.-W."/>
            <person name="Moestl D."/>
            <person name="Nasr F."/>
            <person name="Nicaud J.-M."/>
            <person name="Niedenthal R.K."/>
            <person name="Pandolfo D."/>
            <person name="Pierard A."/>
            <person name="Piravandi E."/>
            <person name="Planta R.J."/>
            <person name="Pohl T.M."/>
            <person name="Purnelle B."/>
            <person name="Rebischung C."/>
            <person name="Remacha M.A."/>
            <person name="Revuelta J.L."/>
            <person name="Rinke M."/>
            <person name="Saiz J.E."/>
            <person name="Sartorello F."/>
            <person name="Scherens B."/>
            <person name="Sen-Gupta M."/>
            <person name="Soler-Mira A."/>
            <person name="Urbanus J.H.M."/>
            <person name="Valle G."/>
            <person name="Van Dyck L."/>
            <person name="Verhasselt P."/>
            <person name="Vierendeels F."/>
            <person name="Vissers S."/>
            <person name="Voet M."/>
            <person name="Volckaert G."/>
            <person name="Wach A."/>
            <person name="Wambutt R."/>
            <person name="Wedler H."/>
            <person name="Zollner A."/>
            <person name="Hani J."/>
        </authorList>
    </citation>
    <scope>NUCLEOTIDE SEQUENCE [LARGE SCALE GENOMIC DNA]</scope>
    <source>
        <strain>ATCC 204508 / S288c</strain>
    </source>
</reference>
<reference key="4">
    <citation type="journal article" date="2014" name="G3 (Bethesda)">
        <title>The reference genome sequence of Saccharomyces cerevisiae: Then and now.</title>
        <authorList>
            <person name="Engel S.R."/>
            <person name="Dietrich F.S."/>
            <person name="Fisk D.G."/>
            <person name="Binkley G."/>
            <person name="Balakrishnan R."/>
            <person name="Costanzo M.C."/>
            <person name="Dwight S.S."/>
            <person name="Hitz B.C."/>
            <person name="Karra K."/>
            <person name="Nash R.S."/>
            <person name="Weng S."/>
            <person name="Wong E.D."/>
            <person name="Lloyd P."/>
            <person name="Skrzypek M.S."/>
            <person name="Miyasato S.R."/>
            <person name="Simison M."/>
            <person name="Cherry J.M."/>
        </authorList>
    </citation>
    <scope>GENOME REANNOTATION</scope>
    <source>
        <strain>ATCC 204508 / S288c</strain>
    </source>
</reference>
<reference key="5">
    <citation type="journal article" date="1999" name="EMBO J.">
        <title>Sm and Sm-like proteins assemble in two related complexes of deep evolutionary origin.</title>
        <authorList>
            <person name="Salgado-Garrido J."/>
            <person name="Bragado-Nilsson E."/>
            <person name="Kandels-Lewis S."/>
            <person name="Seraphin B."/>
        </authorList>
    </citation>
    <scope>FUNCTION</scope>
    <scope>IDENTIFICATION IN THE LSM2-LSM8 COMPLEX</scope>
    <scope>ASSOCIATION WITH PRE-P RNA</scope>
</reference>
<reference key="6">
    <citation type="journal article" date="1999" name="EMBO J.">
        <title>Characterization of Sm-like proteins in yeast and their association with U6 snRNA.</title>
        <authorList>
            <person name="Mayes A.E."/>
            <person name="Verdone L."/>
            <person name="Legrain P."/>
            <person name="Beggs J.D."/>
        </authorList>
    </citation>
    <scope>CHARACTERIZATION</scope>
</reference>
<reference key="7">
    <citation type="journal article" date="1999" name="EMBO J.">
        <title>Identification by mass spectrometry and functional analysis of novel proteins of the yeast [U4/U6.U5] tri-snRNP.</title>
        <authorList>
            <person name="Gottschalk A."/>
            <person name="Neubauer G."/>
            <person name="Banroques J."/>
            <person name="Mann M."/>
            <person name="Luehrmann R."/>
            <person name="Fabrizio P."/>
        </authorList>
    </citation>
    <scope>SUBUNIT</scope>
    <scope>IDENTIFICATION IN THE U4/U5/U6 TRI-SNRNP COMPLEX</scope>
    <scope>IDENTIFICATION BY MASS SPECTROMETRY</scope>
</reference>
<reference key="8">
    <citation type="journal article" date="2000" name="EMBO J.">
        <title>A Sm-like protein complex that participates in mRNA degradation.</title>
        <authorList>
            <person name="Bouveret E."/>
            <person name="Rigaut G."/>
            <person name="Shevchenko A."/>
            <person name="Wilm M."/>
            <person name="Seraphin B."/>
        </authorList>
    </citation>
    <scope>IDENTIFICATION IN THE LSM1-LSM7 COMPLEX</scope>
    <scope>ASSOCIATION OF THE LSM1-LSM7 COMPLEX WITH PAT1 AND XRN1</scope>
    <scope>FUNCTION OF THE LSM1-LSM7 COMPLEX</scope>
    <scope>IDENTIFICATION IN THE LSM2-LSM8 COMPLEX</scope>
    <scope>ASSOCIATION OF THE LSM2-LSM8 COMPLEX WITH U6 SNRNA</scope>
    <scope>IDENTIFICATION BY MASS SPECTROMETRY</scope>
</reference>
<reference key="9">
    <citation type="journal article" date="2000" name="Nature">
        <title>Yeast Sm-like proteins function in mRNA decapping and decay.</title>
        <authorList>
            <person name="Tharun S."/>
            <person name="He W."/>
            <person name="Mayes A.E."/>
            <person name="Lennertz P."/>
            <person name="Beggs J.D."/>
            <person name="Parker R."/>
        </authorList>
    </citation>
    <scope>FUNCTION OF THE LSM1-LSM7 COMPLEX</scope>
</reference>
<reference key="10">
    <citation type="journal article" date="2002" name="Mol. Cell. Biol.">
        <title>Lsm proteins are required for normal processing of pre-tRNAs and their efficient association with La-homologous protein Lhp1p.</title>
        <authorList>
            <person name="Kufel J."/>
            <person name="Allmang C."/>
            <person name="Verdone L."/>
            <person name="Beggs J.D."/>
            <person name="Tollervey D."/>
        </authorList>
    </citation>
    <scope>FUNCTION</scope>
</reference>
<reference key="11">
    <citation type="journal article" date="2003" name="J. Biol. Chem.">
        <title>Lsm Proteins are required for normal processing and stability of ribosomal RNAs.</title>
        <authorList>
            <person name="Kufel J."/>
            <person name="Allmang C."/>
            <person name="Petfalski E."/>
            <person name="Beggs J.D."/>
            <person name="Tollervey D."/>
        </authorList>
    </citation>
    <scope>FUNCTION</scope>
</reference>
<reference key="12">
    <citation type="journal article" date="2003" name="Nature">
        <title>Global analysis of protein localization in budding yeast.</title>
        <authorList>
            <person name="Huh W.-K."/>
            <person name="Falvo J.V."/>
            <person name="Gerke L.C."/>
            <person name="Carroll A.S."/>
            <person name="Howson R.W."/>
            <person name="Weissman J.S."/>
            <person name="O'Shea E.K."/>
        </authorList>
    </citation>
    <scope>SUBCELLULAR LOCATION [LARGE SCALE ANALYSIS]</scope>
</reference>
<reference key="13">
    <citation type="journal article" date="2003" name="Nature">
        <title>Global analysis of protein expression in yeast.</title>
        <authorList>
            <person name="Ghaemmaghami S."/>
            <person name="Huh W.-K."/>
            <person name="Bower K."/>
            <person name="Howson R.W."/>
            <person name="Belle A."/>
            <person name="Dephoure N."/>
            <person name="O'Shea E.K."/>
            <person name="Weissman J.S."/>
        </authorList>
    </citation>
    <scope>LEVEL OF PROTEIN EXPRESSION [LARGE SCALE ANALYSIS]</scope>
</reference>
<reference key="14">
    <citation type="journal article" date="2003" name="Nucleic Acids Res.">
        <title>A complex pathway for 3' processing of the yeast U3 snoRNA.</title>
        <authorList>
            <person name="Kufel J."/>
            <person name="Allmang C."/>
            <person name="Verdone L."/>
            <person name="Beggs J."/>
            <person name="Tollervey D."/>
        </authorList>
    </citation>
    <scope>FUNCTION</scope>
</reference>
<reference key="15">
    <citation type="journal article" date="2004" name="Mol. Biol. Cell">
        <title>An Lsm2-Lsm7 complex in Saccharomyces cerevisiae associates with the small nucleolar RNA snR5.</title>
        <authorList>
            <person name="Fernandez C.F."/>
            <person name="Pannone B.K."/>
            <person name="Chen X."/>
            <person name="Fuchs G."/>
            <person name="Wolin S.L."/>
        </authorList>
    </citation>
    <scope>FUNCTION</scope>
    <scope>IDENTIFICATION IN THE LSM2-LSM7 COMPLEX</scope>
    <scope>SUBCELLULAR LOCATION</scope>
</reference>
<reference key="16">
    <citation type="journal article" date="2004" name="Mol. Cell. Biol.">
        <title>Nuclear pre-mRNA decapping and 5' degradation in yeast require the Lsm2-8p complex.</title>
        <authorList>
            <person name="Kufel J."/>
            <person name="Bousquet-Antonelli C."/>
            <person name="Beggs J.D."/>
            <person name="Tollervey D."/>
        </authorList>
    </citation>
    <scope>FUNCTION OF THE LSM2-LSM8 COMPLEX IN NUCLEAR MRNA DEGRADATION</scope>
</reference>
<reference key="17">
    <citation type="journal article" date="2006" name="Proc. Natl. Acad. Sci. U.S.A.">
        <title>A large-scale full-length cDNA analysis to explore the budding yeast transcriptome.</title>
        <authorList>
            <person name="Miura F."/>
            <person name="Kawaguchi N."/>
            <person name="Sese J."/>
            <person name="Toyoda A."/>
            <person name="Hattori M."/>
            <person name="Morishita S."/>
            <person name="Ito T."/>
        </authorList>
    </citation>
    <scope>IDENTIFICATION OF INTRON</scope>
</reference>
<reference key="18">
    <citation type="journal article" date="2012" name="Proc. Natl. Acad. Sci. U.S.A.">
        <title>N-terminal acetylome analyses and functional insights of the N-terminal acetyltransferase NatB.</title>
        <authorList>
            <person name="Van Damme P."/>
            <person name="Lasa M."/>
            <person name="Polevoda B."/>
            <person name="Gazquez C."/>
            <person name="Elosegui-Artola A."/>
            <person name="Kim D.S."/>
            <person name="De Juan-Pardo E."/>
            <person name="Demeyer K."/>
            <person name="Hole K."/>
            <person name="Larrea E."/>
            <person name="Timmerman E."/>
            <person name="Prieto J."/>
            <person name="Arnesen T."/>
            <person name="Sherman F."/>
            <person name="Gevaert K."/>
            <person name="Aldabe R."/>
        </authorList>
    </citation>
    <scope>IDENTIFICATION BY MASS SPECTROMETRY [LARGE SCALE ANALYSIS]</scope>
</reference>
<reference key="19">
    <citation type="journal article" date="2018" name="PLoS Genet.">
        <title>The Lsm1-7/Pat1 complex binds to stress-activated mRNAs and modulates the response to hyperosmotic shock.</title>
        <authorList>
            <person name="Garre E."/>
            <person name="Pelechano V."/>
            <person name="Sanchez Del Pino M."/>
            <person name="Alepuz P."/>
            <person name="Sunnerhagen P."/>
        </authorList>
    </citation>
    <scope>FUNCTION</scope>
</reference>
<reference key="20">
    <citation type="journal article" date="2013" name="Cell Rep.">
        <title>Architecture of the Lsm1-7-Pat1 complex: a conserved assembly in eukaryotic mRNA turnover.</title>
        <authorList>
            <person name="Sharif H."/>
            <person name="Conti E."/>
        </authorList>
    </citation>
    <scope>X-RAY CRYSTALLOGRAPHY (2.30 ANGSTROMS) OF LSM1-LSM7 COMPLEX</scope>
    <scope>SUBUNIT</scope>
    <scope>INTERACTION WITH PAT1</scope>
</reference>
<reference key="21">
    <citation type="journal article" date="2014" name="Cell Res.">
        <title>Crystal structure and biochemical analysis of the heptameric Lsm1-7 complex.</title>
        <authorList>
            <person name="Zhou L."/>
            <person name="Zhou Y."/>
            <person name="Hang J."/>
            <person name="Wan R."/>
            <person name="Lu G."/>
            <person name="Yan C."/>
            <person name="Shi Y."/>
        </authorList>
    </citation>
    <scope>X-RAY CRYSTALLOGRAPHY (2.95 ANGSTROMS) OF LSM1-LSM7 COMPLEX</scope>
    <scope>SUBUNIT</scope>
    <scope>FUNCTION</scope>
    <scope>RNA-BINDING</scope>
    <scope>MUTAGENESIS OF ARG-95</scope>
</reference>
<reference key="22">
    <citation type="journal article" date="2014" name="Nature">
        <title>Crystal structures of the Lsm complex bound to the 3' end sequence of U6 small nuclear RNA.</title>
        <authorList>
            <person name="Zhou L."/>
            <person name="Hang J."/>
            <person name="Zhou Y."/>
            <person name="Wan R."/>
            <person name="Lu G."/>
            <person name="Yin P."/>
            <person name="Yan C."/>
            <person name="Shi Y."/>
        </authorList>
    </citation>
    <scope>X-RAY CRYSTALLOGRAPHY (2.60 ANGSTROMS) OF LSM2-LSM8 COMPLEX</scope>
    <scope>SUBUNIT</scope>
    <scope>FUNCTION</scope>
    <scope>RNA-BINDING</scope>
    <scope>MUTAGENESIS OF ARG-95</scope>
</reference>
<reference evidence="21 22" key="23">
    <citation type="journal article" date="2018" name="Nat. Commun.">
        <title>Architecture of the U6 snRNP reveals specific recognition of 3'-end processed U6 snRNA.</title>
        <authorList>
            <person name="Montemayor E.J."/>
            <person name="Didychuk A.L."/>
            <person name="Yake A.D."/>
            <person name="Sidhu G.K."/>
            <person name="Brow D.A."/>
            <person name="Butcher S.E."/>
        </authorList>
    </citation>
    <scope>X-RAY CRYSTALLOGRAPHY (2.71 ANGSTROMS) IN COMPLEX WITH SNR6; LSM2; LSM3; LSM4; LSM5; LSM6; PRP24 AND LSM8</scope>
    <scope>FUNCTION</scope>
    <scope>IDENTIFICATION IN THE U4/U6 SNRNP ASSEMBLY</scope>
</reference>
<dbReference type="EMBL" id="Z46843">
    <property type="protein sequence ID" value="CAA86879.1"/>
    <property type="status" value="ALT_SEQ"/>
    <property type="molecule type" value="Genomic_DNA"/>
</dbReference>
<dbReference type="EMBL" id="Z71423">
    <property type="protein sequence ID" value="CAA96030.1"/>
    <property type="status" value="ALT_SEQ"/>
    <property type="molecule type" value="Genomic_DNA"/>
</dbReference>
<dbReference type="EMBL" id="BK006947">
    <property type="protein sequence ID" value="DAA10401.1"/>
    <property type="molecule type" value="Genomic_DNA"/>
</dbReference>
<dbReference type="PIR" id="S55137">
    <property type="entry name" value="S55137"/>
</dbReference>
<dbReference type="RefSeq" id="NP_014252.2">
    <property type="nucleotide sequence ID" value="NM_001182985.1"/>
</dbReference>
<dbReference type="PDB" id="3JCM">
    <property type="method" value="EM"/>
    <property type="resolution" value="3.80 A"/>
    <property type="chains" value="g=1-115"/>
</dbReference>
<dbReference type="PDB" id="4C8Q">
    <property type="method" value="X-ray"/>
    <property type="resolution" value="3.70 A"/>
    <property type="chains" value="G=1-115"/>
</dbReference>
<dbReference type="PDB" id="4C92">
    <property type="method" value="X-ray"/>
    <property type="resolution" value="2.30 A"/>
    <property type="chains" value="G=1-115"/>
</dbReference>
<dbReference type="PDB" id="4M75">
    <property type="method" value="X-ray"/>
    <property type="resolution" value="2.95 A"/>
    <property type="chains" value="F/M=1-115"/>
</dbReference>
<dbReference type="PDB" id="4M77">
    <property type="method" value="X-ray"/>
    <property type="resolution" value="3.11 A"/>
    <property type="chains" value="F/M=1-115"/>
</dbReference>
<dbReference type="PDB" id="4M78">
    <property type="method" value="X-ray"/>
    <property type="resolution" value="2.79 A"/>
    <property type="chains" value="F/M=1-115"/>
</dbReference>
<dbReference type="PDB" id="4M7A">
    <property type="method" value="X-ray"/>
    <property type="resolution" value="2.78 A"/>
    <property type="chains" value="F/M=1-115"/>
</dbReference>
<dbReference type="PDB" id="4M7D">
    <property type="method" value="X-ray"/>
    <property type="resolution" value="2.60 A"/>
    <property type="chains" value="F/M=1-115"/>
</dbReference>
<dbReference type="PDB" id="5GAN">
    <property type="method" value="EM"/>
    <property type="resolution" value="3.60 A"/>
    <property type="chains" value="7=1-115"/>
</dbReference>
<dbReference type="PDB" id="5NRL">
    <property type="method" value="EM"/>
    <property type="resolution" value="7.20 A"/>
    <property type="chains" value="7=1-115"/>
</dbReference>
<dbReference type="PDB" id="5VSU">
    <property type="method" value="X-ray"/>
    <property type="resolution" value="3.10 A"/>
    <property type="chains" value="G=1-115"/>
</dbReference>
<dbReference type="PDB" id="5ZWM">
    <property type="method" value="EM"/>
    <property type="resolution" value="3.40 A"/>
    <property type="chains" value="y=1-115"/>
</dbReference>
<dbReference type="PDB" id="5ZWO">
    <property type="method" value="EM"/>
    <property type="resolution" value="3.90 A"/>
    <property type="chains" value="y=1-115"/>
</dbReference>
<dbReference type="PDB" id="6ASO">
    <property type="method" value="X-ray"/>
    <property type="resolution" value="2.71 A"/>
    <property type="chains" value="G=1-115"/>
</dbReference>
<dbReference type="PDBsum" id="3JCM"/>
<dbReference type="PDBsum" id="4C8Q"/>
<dbReference type="PDBsum" id="4C92"/>
<dbReference type="PDBsum" id="4M75"/>
<dbReference type="PDBsum" id="4M77"/>
<dbReference type="PDBsum" id="4M78"/>
<dbReference type="PDBsum" id="4M7A"/>
<dbReference type="PDBsum" id="4M7D"/>
<dbReference type="PDBsum" id="5GAN"/>
<dbReference type="PDBsum" id="5NRL"/>
<dbReference type="PDBsum" id="5VSU"/>
<dbReference type="PDBsum" id="5ZWM"/>
<dbReference type="PDBsum" id="5ZWO"/>
<dbReference type="PDBsum" id="6ASO"/>
<dbReference type="EMDB" id="EMD-3683"/>
<dbReference type="EMDB" id="EMD-6972"/>
<dbReference type="EMDB" id="EMD-6974"/>
<dbReference type="EMDB" id="EMD-8012"/>
<dbReference type="SMR" id="P53905"/>
<dbReference type="BioGRID" id="35681">
    <property type="interactions" value="828"/>
</dbReference>
<dbReference type="ComplexPortal" id="CPX-112">
    <property type="entry name" value="LSM1-7-PAT1 complex"/>
</dbReference>
<dbReference type="ComplexPortal" id="CPX-24">
    <property type="entry name" value="U6 small nuclear ribonucleoprotein complex"/>
</dbReference>
<dbReference type="ComplexPortal" id="CPX-25">
    <property type="entry name" value="U4/U6.U5 tri-small nuclear ribonucleoprotein complex"/>
</dbReference>
<dbReference type="ComplexPortal" id="CPX-32">
    <property type="entry name" value="U4/U6 small nuclear ribonucleoprotein complex"/>
</dbReference>
<dbReference type="ComplexPortal" id="CPX-44">
    <property type="entry name" value="LSM2-8 complex"/>
</dbReference>
<dbReference type="ComplexPortal" id="CPX-45">
    <property type="entry name" value="LSM1-7 complex"/>
</dbReference>
<dbReference type="ComplexPortal" id="CPX-46">
    <property type="entry name" value="LSM2-7 complex"/>
</dbReference>
<dbReference type="DIP" id="DIP-1419N"/>
<dbReference type="FunCoup" id="P53905">
    <property type="interactions" value="1003"/>
</dbReference>
<dbReference type="IntAct" id="P53905">
    <property type="interactions" value="61"/>
</dbReference>
<dbReference type="MINT" id="P53905"/>
<dbReference type="STRING" id="4932.YNL147W"/>
<dbReference type="PaxDb" id="4932-YNL147W"/>
<dbReference type="PeptideAtlas" id="P53905"/>
<dbReference type="EnsemblFungi" id="YNL147W_mRNA">
    <property type="protein sequence ID" value="YNL147W"/>
    <property type="gene ID" value="YNL147W"/>
</dbReference>
<dbReference type="GeneID" id="855575"/>
<dbReference type="KEGG" id="sce:YNL147W"/>
<dbReference type="AGR" id="SGD:S000005091"/>
<dbReference type="SGD" id="S000005091">
    <property type="gene designation" value="LSM7"/>
</dbReference>
<dbReference type="VEuPathDB" id="FungiDB:YNL147W"/>
<dbReference type="eggNOG" id="KOG1781">
    <property type="taxonomic scope" value="Eukaryota"/>
</dbReference>
<dbReference type="GeneTree" id="ENSGT00510000047872"/>
<dbReference type="HOGENOM" id="CLU_076902_3_2_1"/>
<dbReference type="InParanoid" id="P53905"/>
<dbReference type="OMA" id="PFVQQEE"/>
<dbReference type="OrthoDB" id="274944at2759"/>
<dbReference type="BioCyc" id="YEAST:G3O-33165-MONOMER"/>
<dbReference type="Reactome" id="R-SCE-430039">
    <property type="pathway name" value="mRNA decay by 5' to 3' exoribonuclease"/>
</dbReference>
<dbReference type="BioGRID-ORCS" id="855575">
    <property type="hits" value="7 hits in 10 CRISPR screens"/>
</dbReference>
<dbReference type="CD-CODE" id="A777E0F8">
    <property type="entry name" value="P-body"/>
</dbReference>
<dbReference type="CD-CODE" id="E03F929F">
    <property type="entry name" value="Stress granule"/>
</dbReference>
<dbReference type="EvolutionaryTrace" id="P53905"/>
<dbReference type="PRO" id="PR:P53905"/>
<dbReference type="Proteomes" id="UP000002311">
    <property type="component" value="Chromosome XIV"/>
</dbReference>
<dbReference type="RNAct" id="P53905">
    <property type="molecule type" value="protein"/>
</dbReference>
<dbReference type="GO" id="GO:0071013">
    <property type="term" value="C:catalytic step 2 spliceosome"/>
    <property type="evidence" value="ECO:0000318"/>
    <property type="project" value="GO_Central"/>
</dbReference>
<dbReference type="GO" id="GO:0005737">
    <property type="term" value="C:cytoplasm"/>
    <property type="evidence" value="ECO:0000314"/>
    <property type="project" value="SGD"/>
</dbReference>
<dbReference type="GO" id="GO:1990726">
    <property type="term" value="C:Lsm1-7-Pat1 complex"/>
    <property type="evidence" value="ECO:0000314"/>
    <property type="project" value="SGD"/>
</dbReference>
<dbReference type="GO" id="GO:0005730">
    <property type="term" value="C:nucleolus"/>
    <property type="evidence" value="ECO:0000314"/>
    <property type="project" value="ComplexPortal"/>
</dbReference>
<dbReference type="GO" id="GO:0005634">
    <property type="term" value="C:nucleus"/>
    <property type="evidence" value="ECO:0000314"/>
    <property type="project" value="ComplexPortal"/>
</dbReference>
<dbReference type="GO" id="GO:0000932">
    <property type="term" value="C:P-body"/>
    <property type="evidence" value="ECO:0000314"/>
    <property type="project" value="ComplexPortal"/>
</dbReference>
<dbReference type="GO" id="GO:0005732">
    <property type="term" value="C:sno(s)RNA-containing ribonucleoprotein complex"/>
    <property type="evidence" value="ECO:0000353"/>
    <property type="project" value="SGD"/>
</dbReference>
<dbReference type="GO" id="GO:0005681">
    <property type="term" value="C:spliceosomal complex"/>
    <property type="evidence" value="ECO:0000303"/>
    <property type="project" value="ComplexPortal"/>
</dbReference>
<dbReference type="GO" id="GO:0097526">
    <property type="term" value="C:spliceosomal tri-snRNP complex"/>
    <property type="evidence" value="ECO:0000318"/>
    <property type="project" value="GO_Central"/>
</dbReference>
<dbReference type="GO" id="GO:0071004">
    <property type="term" value="C:U2-type prespliceosome"/>
    <property type="evidence" value="ECO:0000318"/>
    <property type="project" value="GO_Central"/>
</dbReference>
<dbReference type="GO" id="GO:0071001">
    <property type="term" value="C:U4/U6 snRNP"/>
    <property type="evidence" value="ECO:0000303"/>
    <property type="project" value="ComplexPortal"/>
</dbReference>
<dbReference type="GO" id="GO:0046540">
    <property type="term" value="C:U4/U6 x U5 tri-snRNP complex"/>
    <property type="evidence" value="ECO:0000314"/>
    <property type="project" value="SGD"/>
</dbReference>
<dbReference type="GO" id="GO:0005688">
    <property type="term" value="C:U6 snRNP"/>
    <property type="evidence" value="ECO:0000314"/>
    <property type="project" value="ComplexPortal"/>
</dbReference>
<dbReference type="GO" id="GO:0003723">
    <property type="term" value="F:RNA binding"/>
    <property type="evidence" value="ECO:0007669"/>
    <property type="project" value="UniProtKB-KW"/>
</dbReference>
<dbReference type="GO" id="GO:0000290">
    <property type="term" value="P:deadenylation-dependent decapping of nuclear-transcribed mRNA"/>
    <property type="evidence" value="ECO:0000315"/>
    <property type="project" value="ComplexPortal"/>
</dbReference>
<dbReference type="GO" id="GO:0030490">
    <property type="term" value="P:maturation of SSU-rRNA"/>
    <property type="evidence" value="ECO:0000315"/>
    <property type="project" value="SGD"/>
</dbReference>
<dbReference type="GO" id="GO:0000398">
    <property type="term" value="P:mRNA splicing, via spliceosome"/>
    <property type="evidence" value="ECO:0000315"/>
    <property type="project" value="SGD"/>
</dbReference>
<dbReference type="GO" id="GO:0000956">
    <property type="term" value="P:nuclear-transcribed mRNA catabolic process"/>
    <property type="evidence" value="ECO:0000315"/>
    <property type="project" value="SGD"/>
</dbReference>
<dbReference type="GO" id="GO:0006364">
    <property type="term" value="P:rRNA processing"/>
    <property type="evidence" value="ECO:0000315"/>
    <property type="project" value="ComplexPortal"/>
</dbReference>
<dbReference type="GO" id="GO:0008033">
    <property type="term" value="P:tRNA processing"/>
    <property type="evidence" value="ECO:0000315"/>
    <property type="project" value="ComplexPortal"/>
</dbReference>
<dbReference type="CDD" id="cd01729">
    <property type="entry name" value="LSm7"/>
    <property type="match status" value="1"/>
</dbReference>
<dbReference type="DisProt" id="DP01261"/>
<dbReference type="FunFam" id="2.30.30.100:FF:000098">
    <property type="entry name" value="U6 snRNA-associated Sm-like protein LSm7"/>
    <property type="match status" value="1"/>
</dbReference>
<dbReference type="Gene3D" id="2.30.30.100">
    <property type="match status" value="1"/>
</dbReference>
<dbReference type="InterPro" id="IPR017132">
    <property type="entry name" value="Lsm7"/>
</dbReference>
<dbReference type="InterPro" id="IPR044641">
    <property type="entry name" value="Lsm7/SmG-like"/>
</dbReference>
<dbReference type="InterPro" id="IPR010920">
    <property type="entry name" value="LSM_dom_sf"/>
</dbReference>
<dbReference type="InterPro" id="IPR047575">
    <property type="entry name" value="Sm"/>
</dbReference>
<dbReference type="InterPro" id="IPR001163">
    <property type="entry name" value="Sm_dom_euk/arc"/>
</dbReference>
<dbReference type="PANTHER" id="PTHR10553">
    <property type="entry name" value="SMALL NUCLEAR RIBONUCLEOPROTEIN"/>
    <property type="match status" value="1"/>
</dbReference>
<dbReference type="PANTHER" id="PTHR10553:SF5">
    <property type="entry name" value="U6 SNRNA-ASSOCIATED SM-LIKE PROTEIN LSM7"/>
    <property type="match status" value="1"/>
</dbReference>
<dbReference type="Pfam" id="PF01423">
    <property type="entry name" value="LSM"/>
    <property type="match status" value="1"/>
</dbReference>
<dbReference type="PIRSF" id="PIRSF037188">
    <property type="entry name" value="U6_snRNA_Lsm7"/>
    <property type="match status" value="1"/>
</dbReference>
<dbReference type="SMART" id="SM00651">
    <property type="entry name" value="Sm"/>
    <property type="match status" value="1"/>
</dbReference>
<dbReference type="SUPFAM" id="SSF50182">
    <property type="entry name" value="Sm-like ribonucleoproteins"/>
    <property type="match status" value="1"/>
</dbReference>
<dbReference type="PROSITE" id="PS52002">
    <property type="entry name" value="SM"/>
    <property type="match status" value="1"/>
</dbReference>
<keyword id="KW-0002">3D-structure</keyword>
<keyword id="KW-0963">Cytoplasm</keyword>
<keyword id="KW-0507">mRNA processing</keyword>
<keyword id="KW-0508">mRNA splicing</keyword>
<keyword id="KW-0539">Nucleus</keyword>
<keyword id="KW-1185">Reference proteome</keyword>
<keyword id="KW-0687">Ribonucleoprotein</keyword>
<keyword id="KW-0694">RNA-binding</keyword>
<keyword id="KW-0698">rRNA processing</keyword>
<keyword id="KW-0747">Spliceosome</keyword>
<keyword id="KW-0819">tRNA processing</keyword>
<sequence length="115" mass="13006">MHQQHSKSENKPQQQRKKFEGPKREAILDLAKYKDSKIRVKLMGGKLVIGVLKGYDQLMNLVLDDTVEYMSNPDDENNTELISKNARKLGLTVIRGTILVSLSSAEGSDVLYMQK</sequence>
<evidence type="ECO:0000255" key="1">
    <source>
        <dbReference type="PROSITE-ProRule" id="PRU01346"/>
    </source>
</evidence>
<evidence type="ECO:0000256" key="2">
    <source>
        <dbReference type="SAM" id="MobiDB-lite"/>
    </source>
</evidence>
<evidence type="ECO:0000269" key="3">
    <source>
    </source>
</evidence>
<evidence type="ECO:0000269" key="4">
    <source>
    </source>
</evidence>
<evidence type="ECO:0000269" key="5">
    <source>
    </source>
</evidence>
<evidence type="ECO:0000269" key="6">
    <source>
    </source>
</evidence>
<evidence type="ECO:0000269" key="7">
    <source>
    </source>
</evidence>
<evidence type="ECO:0000269" key="8">
    <source>
    </source>
</evidence>
<evidence type="ECO:0000269" key="9">
    <source>
    </source>
</evidence>
<evidence type="ECO:0000269" key="10">
    <source>
    </source>
</evidence>
<evidence type="ECO:0000269" key="11">
    <source>
    </source>
</evidence>
<evidence type="ECO:0000269" key="12">
    <source>
    </source>
</evidence>
<evidence type="ECO:0000269" key="13">
    <source>
    </source>
</evidence>
<evidence type="ECO:0000269" key="14">
    <source>
    </source>
</evidence>
<evidence type="ECO:0000269" key="15">
    <source>
    </source>
</evidence>
<evidence type="ECO:0000269" key="16">
    <source>
    </source>
</evidence>
<evidence type="ECO:0000269" key="17">
    <source>
    </source>
</evidence>
<evidence type="ECO:0000269" key="18">
    <source>
    </source>
</evidence>
<evidence type="ECO:0000305" key="19"/>
<evidence type="ECO:0000305" key="20">
    <source>
    </source>
</evidence>
<evidence type="ECO:0007744" key="21">
    <source>
        <dbReference type="PDB" id="5VSU"/>
    </source>
</evidence>
<evidence type="ECO:0007744" key="22">
    <source>
        <dbReference type="PDB" id="6ASO"/>
    </source>
</evidence>
<evidence type="ECO:0007829" key="23">
    <source>
        <dbReference type="PDB" id="4C92"/>
    </source>
</evidence>
<evidence type="ECO:0007829" key="24">
    <source>
        <dbReference type="PDB" id="4M7A"/>
    </source>
</evidence>
<accession>P53905</accession>
<accession>D6W135</accession>
<gene>
    <name type="primary">LSM7</name>
    <name type="ordered locus">YNL147W</name>
    <name type="ORF">N1202</name>
    <name type="ORF">N1780</name>
</gene>
<protein>
    <recommendedName>
        <fullName evidence="19">LSM complex subunit LSM7</fullName>
    </recommendedName>
</protein>
<organism>
    <name type="scientific">Saccharomyces cerevisiae (strain ATCC 204508 / S288c)</name>
    <name type="common">Baker's yeast</name>
    <dbReference type="NCBI Taxonomy" id="559292"/>
    <lineage>
        <taxon>Eukaryota</taxon>
        <taxon>Fungi</taxon>
        <taxon>Dikarya</taxon>
        <taxon>Ascomycota</taxon>
        <taxon>Saccharomycotina</taxon>
        <taxon>Saccharomycetes</taxon>
        <taxon>Saccharomycetales</taxon>
        <taxon>Saccharomycetaceae</taxon>
        <taxon>Saccharomyces</taxon>
    </lineage>
</organism>
<proteinExistence type="evidence at protein level"/>
<comment type="function">
    <text evidence="3 5 6 7 8 11 12 13 15 16 17 18">Component of LSm protein complexes, which are involved in RNA processing and may function in a chaperone-like manner (PubMed:10747033, PubMed:12077351, PubMed:12438310, PubMed:14627812, PubMed:24513854). Component of the cytoplasmic LSM1-LSM7 complex which is involved in mRNA degradation by activating the decapping step (PubMed:10747033, PubMed:10761922, PubMed:24513854). Together with PAT1, the LSM1-LSM7 complex binds to osmotic stress-activated mRNAs to attenuate the osmotic stress response, probably by limiting ribosome access to the mRNA and consequently translation (PubMed:30059503). Component of the nuclear LSM2-LSM8 complex, which is involved in spliceosome assembly (PubMed:10747033, PubMed:12077351, PubMed:12438310, PubMed:14627812). The LSM2-LSM8 complex plays a role in the biogenesis of the spliceosomal U4/U6-U5 tri-snRNP complex by accelerating PRP24-mediated annealing of U4/U6 di-snRNA (PubMed:10747033, PubMed:24240276, PubMed:29717126). The LSM2-LSM8 complex binds U6 snRNA terminating with a non-cyclic 3' phosphate group (PubMed:29717126). LSM2-LSM8 is probably also involved in degradation of nuclear pre-mRNA by targeting them for decapping (PubMed:15485930). LSM2-LSM8 could be involved in processing of pre-tRNAs, pre-rRNAs and U3 snoRNA, although involvement may be indirect (PubMed:12077351, PubMed:12438310, PubMed:15075370). In a complex that probably contains LSM2-LSM7, but not LSM1 or LSM8, associates with the precursor of the RNA component of RNase P (pre-P RNA) and may be involved in maturing pre-P RNA; the complex also associates with snoRNA SNR5 (PubMed:10369684, PubMed:15075370).</text>
</comment>
<comment type="subunit">
    <text evidence="3 4 5 12 14 15 16 17">Component of the heptameric LSM1-LSM7 complex that forms a seven-membered ring structure with a donut shape (PubMed:10747033, PubMed:24139796, PubMed:24513854). The LSm subunits are arranged in the order LSM1, LSM2, LSM3, LSM6, LSM5, LSM7 and LSM4 (PubMed:24139796). Except for LSM1, where a C-terminal helix crosses the ring structure to form additional interactions with LSM3 and LSM6, each subunit interacts only with its two neighboring subunits (PubMed:24139796). The LSM1-LSM7 complex interacts with PAT1; within the complex PAT1 has direct interactions with LSM2 and LSM3 (PubMed:10747033, PubMed:24139796). The LSM1-LSM7 complex interacts with XRN1 (PubMed:10747033). Component of the heptameric LSM2-LSM8 complex that forms a seven-membered ring structure with a donut shape; an RNA strand can pass through the hole in the center of the ring structure (PubMed:10369684, PubMed:10747033, PubMed:24240276, PubMed:29717126). The LSm subunits are arranged in the order LSM8, LSM2, LSM3, LSM6, LSM5, LSM7 and LSM4 (PubMed:24240276). Component of the spliceosome U4/U6-U5 tri-snRNP complex composed of the U4, U6 and U5 snRNAs and at least PRP3, PRP4, PRP6, PRP8, PRP18, PRP31, PRP38, SNU13, SNU23, SNU66, SNU114, SPP381, SMB1, SMD1, SMD2, SMD3, SMX2, SMX3, LSM2, LSM3, LSM4, LSM5, LSM6, LSM7, LSM8, BRR2 and DIB1 (PubMed:10449419, PubMed:24240276). May be found in a complex comprising LSM2-LSM7 without LSM1 or LSM8; the complex associates with pre-P RNA and snoRNA SNR5 (PubMed:10369684, PubMed:15075370).</text>
</comment>
<comment type="interaction">
    <interactant intactId="EBI-141">
        <id>P53905</id>
    </interactant>
    <interactant intactId="EBI-158">
        <id>P39517</id>
        <label>DHH1</label>
    </interactant>
    <organismsDiffer>false</organismsDiffer>
    <experiments>3</experiments>
</comment>
<comment type="interaction">
    <interactant intactId="EBI-141">
        <id>P53905</id>
    </interactant>
    <interactant intactId="EBI-180">
        <id>P38203</id>
        <label>LSM2</label>
    </interactant>
    <organismsDiffer>false</organismsDiffer>
    <experiments>7</experiments>
</comment>
<comment type="interaction">
    <interactant intactId="EBI-141">
        <id>P53905</id>
    </interactant>
    <interactant intactId="EBI-188">
        <id>P40070</id>
        <label>LSM4</label>
    </interactant>
    <organismsDiffer>false</organismsDiffer>
    <experiments>3</experiments>
</comment>
<comment type="interaction">
    <interactant intactId="EBI-141">
        <id>P53905</id>
    </interactant>
    <interactant intactId="EBI-10236">
        <id>P40089</id>
        <label>LSM5</label>
    </interactant>
    <organismsDiffer>false</organismsDiffer>
    <experiments>3</experiments>
</comment>
<comment type="interaction">
    <interactant intactId="EBI-141">
        <id>P53905</id>
    </interactant>
    <interactant intactId="EBI-313">
        <id>P47093</id>
        <label>LSM8</label>
    </interactant>
    <organismsDiffer>false</organismsDiffer>
    <experiments>3</experiments>
</comment>
<comment type="interaction">
    <interactant intactId="EBI-141">
        <id>P53905</id>
    </interactant>
    <interactant intactId="EBI-204">
        <id>P25644</id>
        <label>PAT1</label>
    </interactant>
    <organismsDiffer>false</organismsDiffer>
    <experiments>4</experiments>
</comment>
<comment type="interaction">
    <interactant intactId="EBI-141">
        <id>P53905</id>
    </interactant>
    <interactant intactId="EBI-219">
        <id>P20053</id>
        <label>PRP4</label>
    </interactant>
    <organismsDiffer>false</organismsDiffer>
    <experiments>3</experiments>
</comment>
<comment type="subcellular location">
    <subcellularLocation>
        <location evidence="9">Nucleus</location>
    </subcellularLocation>
    <subcellularLocation>
        <location evidence="20">Nucleus</location>
        <location evidence="20">Nucleolus</location>
    </subcellularLocation>
    <subcellularLocation>
        <location evidence="9">Cytoplasm</location>
    </subcellularLocation>
</comment>
<comment type="miscellaneous">
    <text evidence="10">Present with 3070 molecules/cell in log phase SD medium.</text>
</comment>
<comment type="similarity">
    <text evidence="19">Belongs to the snRNP Sm proteins family.</text>
</comment>
<comment type="sequence caution" evidence="19">
    <conflict type="erroneous gene model prediction">
        <sequence resource="EMBL-CDS" id="CAA86879"/>
    </conflict>
</comment>
<comment type="sequence caution" evidence="19">
    <conflict type="erroneous gene model prediction">
        <sequence resource="EMBL-CDS" id="CAA96030"/>
    </conflict>
</comment>
<feature type="chain" id="PRO_0000125581" description="LSM complex subunit LSM7">
    <location>
        <begin position="1"/>
        <end position="115"/>
    </location>
</feature>
<feature type="domain" description="Sm" evidence="1">
    <location>
        <begin position="25"/>
        <end position="108"/>
    </location>
</feature>
<feature type="region of interest" description="Disordered" evidence="2">
    <location>
        <begin position="1"/>
        <end position="23"/>
    </location>
</feature>
<feature type="compositionally biased region" description="Basic and acidic residues" evidence="2">
    <location>
        <begin position="1"/>
        <end position="10"/>
    </location>
</feature>
<feature type="mutagenesis site" description="Slightly reduces affinity for poly-U RNA ends." evidence="15 16">
    <original>R</original>
    <variation>A</variation>
    <location>
        <position position="95"/>
    </location>
</feature>
<feature type="helix" evidence="23">
    <location>
        <begin position="30"/>
        <end position="33"/>
    </location>
</feature>
<feature type="strand" evidence="23">
    <location>
        <begin position="36"/>
        <end position="42"/>
    </location>
</feature>
<feature type="turn" evidence="24">
    <location>
        <begin position="43"/>
        <end position="45"/>
    </location>
</feature>
<feature type="strand" evidence="23">
    <location>
        <begin position="47"/>
        <end position="55"/>
    </location>
</feature>
<feature type="strand" evidence="23">
    <location>
        <begin position="61"/>
        <end position="69"/>
    </location>
</feature>
<feature type="strand" evidence="23">
    <location>
        <begin position="86"/>
        <end position="94"/>
    </location>
</feature>
<feature type="helix" evidence="23">
    <location>
        <begin position="96"/>
        <end position="98"/>
    </location>
</feature>
<feature type="strand" evidence="23">
    <location>
        <begin position="99"/>
        <end position="105"/>
    </location>
</feature>